<organism>
    <name type="scientific">Mycobacterium tuberculosis (strain CDC 1551 / Oshkosh)</name>
    <dbReference type="NCBI Taxonomy" id="83331"/>
    <lineage>
        <taxon>Bacteria</taxon>
        <taxon>Bacillati</taxon>
        <taxon>Actinomycetota</taxon>
        <taxon>Actinomycetes</taxon>
        <taxon>Mycobacteriales</taxon>
        <taxon>Mycobacteriaceae</taxon>
        <taxon>Mycobacterium</taxon>
        <taxon>Mycobacterium tuberculosis complex</taxon>
    </lineage>
</organism>
<dbReference type="EC" id="3.1.-.-" evidence="1"/>
<dbReference type="EMBL" id="AE000516">
    <property type="protein sequence ID" value="AAK45625.1"/>
    <property type="molecule type" value="Genomic_DNA"/>
</dbReference>
<dbReference type="PIR" id="E70769">
    <property type="entry name" value="E70769"/>
</dbReference>
<dbReference type="SMR" id="P9WIY4"/>
<dbReference type="KEGG" id="mtc:MT1363"/>
<dbReference type="PATRIC" id="fig|83331.31.peg.1469"/>
<dbReference type="HOGENOM" id="CLU_069350_0_0_11"/>
<dbReference type="Proteomes" id="UP000001020">
    <property type="component" value="Chromosome"/>
</dbReference>
<dbReference type="GO" id="GO:0005737">
    <property type="term" value="C:cytoplasm"/>
    <property type="evidence" value="ECO:0007669"/>
    <property type="project" value="UniProtKB-SubCell"/>
</dbReference>
<dbReference type="GO" id="GO:0003677">
    <property type="term" value="F:DNA binding"/>
    <property type="evidence" value="ECO:0007669"/>
    <property type="project" value="UniProtKB-KW"/>
</dbReference>
<dbReference type="GO" id="GO:0000014">
    <property type="term" value="F:single-stranded DNA endodeoxyribonuclease activity"/>
    <property type="evidence" value="ECO:0007669"/>
    <property type="project" value="UniProtKB-UniRule"/>
</dbReference>
<dbReference type="CDD" id="cd22341">
    <property type="entry name" value="NucS-like"/>
    <property type="match status" value="1"/>
</dbReference>
<dbReference type="Gene3D" id="2.70.180.20">
    <property type="match status" value="1"/>
</dbReference>
<dbReference type="Gene3D" id="3.40.1350.10">
    <property type="match status" value="1"/>
</dbReference>
<dbReference type="HAMAP" id="MF_00722">
    <property type="entry name" value="NucS"/>
    <property type="match status" value="1"/>
</dbReference>
<dbReference type="InterPro" id="IPR002793">
    <property type="entry name" value="Endonuclease_NucS"/>
</dbReference>
<dbReference type="InterPro" id="IPR048301">
    <property type="entry name" value="NucS_C"/>
</dbReference>
<dbReference type="InterPro" id="IPR048302">
    <property type="entry name" value="NucS_N"/>
</dbReference>
<dbReference type="InterPro" id="IPR049173">
    <property type="entry name" value="NucS_N_sf"/>
</dbReference>
<dbReference type="InterPro" id="IPR011856">
    <property type="entry name" value="tRNA_endonuc-like_dom_sf"/>
</dbReference>
<dbReference type="NCBIfam" id="NF002876">
    <property type="entry name" value="PRK03298.1"/>
    <property type="match status" value="1"/>
</dbReference>
<dbReference type="PANTHER" id="PTHR38814">
    <property type="entry name" value="ENDONUCLEASE NUCS"/>
    <property type="match status" value="1"/>
</dbReference>
<dbReference type="PANTHER" id="PTHR38814:SF1">
    <property type="entry name" value="ENDONUCLEASE NUCS"/>
    <property type="match status" value="1"/>
</dbReference>
<dbReference type="Pfam" id="PF01939">
    <property type="entry name" value="NucS_C"/>
    <property type="match status" value="1"/>
</dbReference>
<dbReference type="Pfam" id="PF21003">
    <property type="entry name" value="NucS_N"/>
    <property type="match status" value="1"/>
</dbReference>
<name>NUCS_MYCTO</name>
<accession>P9WIY4</accession>
<accession>L0T9A5</accession>
<accession>Q10634</accession>
<feature type="chain" id="PRO_0000427924" description="Endonuclease NucS">
    <location>
        <begin position="1"/>
        <end position="226"/>
    </location>
</feature>
<proteinExistence type="inferred from homology"/>
<gene>
    <name evidence="1" type="primary">nucS</name>
    <name type="ordered locus">MT1363</name>
</gene>
<sequence length="226" mass="25163">MSRVRLVIAQCTVDYIGRLTAHLPSARRLLLFKADGSVSVHADDRAYKPLNWMSPPCWLTEESGGQAPVWVVENKAGEQLRITIEGIEHDSSHELGVDPGLVKDGVEAHLQALLAEHIQLLGEGYTLVRREYMTAIGPVDLLCRDERGGSVAVEIKRRGEIDGVEQLTRYLELLNRDSVLAPVKGVFAAQQIKPQARILATDRGIRCLTLDYDTMRGMDSGEYRLF</sequence>
<comment type="function">
    <text evidence="1">Cleaves both 3' and 5' ssDNA extremities of branched DNA structures.</text>
</comment>
<comment type="subcellular location">
    <subcellularLocation>
        <location evidence="1">Cytoplasm</location>
    </subcellularLocation>
</comment>
<comment type="similarity">
    <text evidence="1">Belongs to the NucS endonuclease family.</text>
</comment>
<keyword id="KW-0963">Cytoplasm</keyword>
<keyword id="KW-0238">DNA-binding</keyword>
<keyword id="KW-0255">Endonuclease</keyword>
<keyword id="KW-0378">Hydrolase</keyword>
<keyword id="KW-0540">Nuclease</keyword>
<keyword id="KW-1185">Reference proteome</keyword>
<protein>
    <recommendedName>
        <fullName evidence="1">Endonuclease NucS</fullName>
        <ecNumber evidence="1">3.1.-.-</ecNumber>
    </recommendedName>
</protein>
<evidence type="ECO:0000255" key="1">
    <source>
        <dbReference type="HAMAP-Rule" id="MF_00722"/>
    </source>
</evidence>
<reference key="1">
    <citation type="journal article" date="2002" name="J. Bacteriol.">
        <title>Whole-genome comparison of Mycobacterium tuberculosis clinical and laboratory strains.</title>
        <authorList>
            <person name="Fleischmann R.D."/>
            <person name="Alland D."/>
            <person name="Eisen J.A."/>
            <person name="Carpenter L."/>
            <person name="White O."/>
            <person name="Peterson J.D."/>
            <person name="DeBoy R.T."/>
            <person name="Dodson R.J."/>
            <person name="Gwinn M.L."/>
            <person name="Haft D.H."/>
            <person name="Hickey E.K."/>
            <person name="Kolonay J.F."/>
            <person name="Nelson W.C."/>
            <person name="Umayam L.A."/>
            <person name="Ermolaeva M.D."/>
            <person name="Salzberg S.L."/>
            <person name="Delcher A."/>
            <person name="Utterback T.R."/>
            <person name="Weidman J.F."/>
            <person name="Khouri H.M."/>
            <person name="Gill J."/>
            <person name="Mikula A."/>
            <person name="Bishai W."/>
            <person name="Jacobs W.R. Jr."/>
            <person name="Venter J.C."/>
            <person name="Fraser C.M."/>
        </authorList>
    </citation>
    <scope>NUCLEOTIDE SEQUENCE [LARGE SCALE GENOMIC DNA]</scope>
    <source>
        <strain>CDC 1551 / Oshkosh</strain>
    </source>
</reference>